<accession>P0AGE8</accession>
<accession>P31465</accession>
<protein>
    <recommendedName>
        <fullName evidence="1">Quinone reductase</fullName>
        <ecNumber evidence="1">1.6.5.2</ecNumber>
    </recommendedName>
    <alternativeName>
        <fullName evidence="1">Chromate reductase</fullName>
        <shortName evidence="1">CHRR</shortName>
        <ecNumber evidence="1">1.6.-.-</ecNumber>
    </alternativeName>
    <alternativeName>
        <fullName evidence="1">NAD(P)H dehydrogenase (quinone)</fullName>
    </alternativeName>
</protein>
<organism>
    <name type="scientific">Shigella flexneri</name>
    <dbReference type="NCBI Taxonomy" id="623"/>
    <lineage>
        <taxon>Bacteria</taxon>
        <taxon>Pseudomonadati</taxon>
        <taxon>Pseudomonadota</taxon>
        <taxon>Gammaproteobacteria</taxon>
        <taxon>Enterobacterales</taxon>
        <taxon>Enterobacteriaceae</taxon>
        <taxon>Shigella</taxon>
    </lineage>
</organism>
<comment type="function">
    <text evidence="1">Catalyzes the reduction of quinones. Acts by simultaneous two-electron transfer, avoiding formation of highly reactive semiquinone intermediates and producing quinols that promote tolerance of H(2)O(2). Quinone reduction is probably the primary biological role of ChrR. Can also reduce toxic chromate to insoluble and less toxic Cr(3+). Catalyzes the transfer of three electrons to Cr(6+) producing Cr(3+) and one electron to molecular oxygen without producing the toxic Cr(5+) species and only producing a minimal amount of reactive oxygen species (ROS). Chromate reduction protects the cell against chromate toxicity, but is likely a secondary activity.</text>
</comment>
<comment type="catalytic activity">
    <reaction evidence="1">
        <text>a quinone + NADH + H(+) = a quinol + NAD(+)</text>
        <dbReference type="Rhea" id="RHEA:46160"/>
        <dbReference type="ChEBI" id="CHEBI:15378"/>
        <dbReference type="ChEBI" id="CHEBI:24646"/>
        <dbReference type="ChEBI" id="CHEBI:57540"/>
        <dbReference type="ChEBI" id="CHEBI:57945"/>
        <dbReference type="ChEBI" id="CHEBI:132124"/>
        <dbReference type="EC" id="1.6.5.2"/>
    </reaction>
</comment>
<comment type="catalytic activity">
    <reaction evidence="1">
        <text>a quinone + NADPH + H(+) = a quinol + NADP(+)</text>
        <dbReference type="Rhea" id="RHEA:46164"/>
        <dbReference type="ChEBI" id="CHEBI:15378"/>
        <dbReference type="ChEBI" id="CHEBI:24646"/>
        <dbReference type="ChEBI" id="CHEBI:57783"/>
        <dbReference type="ChEBI" id="CHEBI:58349"/>
        <dbReference type="ChEBI" id="CHEBI:132124"/>
        <dbReference type="EC" id="1.6.5.2"/>
    </reaction>
</comment>
<comment type="catalytic activity">
    <reaction evidence="1">
        <text>Cr(6+) + 2 NADH + O2 = Cr(3+) + superoxide + 2 NAD(+) + 2 H(+)</text>
        <dbReference type="Rhea" id="RHEA:44372"/>
        <dbReference type="ChEBI" id="CHEBI:15378"/>
        <dbReference type="ChEBI" id="CHEBI:15379"/>
        <dbReference type="ChEBI" id="CHEBI:18421"/>
        <dbReference type="ChEBI" id="CHEBI:33007"/>
        <dbReference type="ChEBI" id="CHEBI:49544"/>
        <dbReference type="ChEBI" id="CHEBI:57540"/>
        <dbReference type="ChEBI" id="CHEBI:57945"/>
    </reaction>
</comment>
<comment type="catalytic activity">
    <reaction evidence="1">
        <text>Cr(6+) + 2 NADPH + O2 = Cr(3+) + superoxide + 2 NADP(+) + 2 H(+)</text>
        <dbReference type="Rhea" id="RHEA:44368"/>
        <dbReference type="ChEBI" id="CHEBI:15378"/>
        <dbReference type="ChEBI" id="CHEBI:15379"/>
        <dbReference type="ChEBI" id="CHEBI:18421"/>
        <dbReference type="ChEBI" id="CHEBI:33007"/>
        <dbReference type="ChEBI" id="CHEBI:49544"/>
        <dbReference type="ChEBI" id="CHEBI:57783"/>
        <dbReference type="ChEBI" id="CHEBI:58349"/>
    </reaction>
</comment>
<comment type="cofactor">
    <cofactor evidence="1">
        <name>FMN</name>
        <dbReference type="ChEBI" id="CHEBI:58210"/>
    </cofactor>
    <text evidence="1">Binds 1 FMN per subunit.</text>
</comment>
<comment type="subunit">
    <text evidence="1">Homotetramer. Dimer of dimers. The tetrameric configuration has a central role in chromate reductase activity.</text>
</comment>
<comment type="similarity">
    <text evidence="2">Belongs to the SsuE family.</text>
</comment>
<reference key="1">
    <citation type="journal article" date="2002" name="Nucleic Acids Res.">
        <title>Genome sequence of Shigella flexneri 2a: insights into pathogenicity through comparison with genomes of Escherichia coli K12 and O157.</title>
        <authorList>
            <person name="Jin Q."/>
            <person name="Yuan Z."/>
            <person name="Xu J."/>
            <person name="Wang Y."/>
            <person name="Shen Y."/>
            <person name="Lu W."/>
            <person name="Wang J."/>
            <person name="Liu H."/>
            <person name="Yang J."/>
            <person name="Yang F."/>
            <person name="Zhang X."/>
            <person name="Zhang J."/>
            <person name="Yang G."/>
            <person name="Wu H."/>
            <person name="Qu D."/>
            <person name="Dong J."/>
            <person name="Sun L."/>
            <person name="Xue Y."/>
            <person name="Zhao A."/>
            <person name="Gao Y."/>
            <person name="Zhu J."/>
            <person name="Kan B."/>
            <person name="Ding K."/>
            <person name="Chen S."/>
            <person name="Cheng H."/>
            <person name="Yao Z."/>
            <person name="He B."/>
            <person name="Chen R."/>
            <person name="Ma D."/>
            <person name="Qiang B."/>
            <person name="Wen Y."/>
            <person name="Hou Y."/>
            <person name="Yu J."/>
        </authorList>
    </citation>
    <scope>NUCLEOTIDE SEQUENCE [LARGE SCALE GENOMIC DNA]</scope>
    <source>
        <strain>301 / Serotype 2a</strain>
    </source>
</reference>
<reference key="2">
    <citation type="journal article" date="2003" name="Infect. Immun.">
        <title>Complete genome sequence and comparative genomics of Shigella flexneri serotype 2a strain 2457T.</title>
        <authorList>
            <person name="Wei J."/>
            <person name="Goldberg M.B."/>
            <person name="Burland V."/>
            <person name="Venkatesan M.M."/>
            <person name="Deng W."/>
            <person name="Fournier G."/>
            <person name="Mayhew G.F."/>
            <person name="Plunkett G. III"/>
            <person name="Rose D.J."/>
            <person name="Darling A."/>
            <person name="Mau B."/>
            <person name="Perna N.T."/>
            <person name="Payne S.M."/>
            <person name="Runyen-Janecky L.J."/>
            <person name="Zhou S."/>
            <person name="Schwartz D.C."/>
            <person name="Blattner F.R."/>
        </authorList>
    </citation>
    <scope>NUCLEOTIDE SEQUENCE [LARGE SCALE GENOMIC DNA]</scope>
    <source>
        <strain>ATCC 700930 / 2457T / Serotype 2a</strain>
    </source>
</reference>
<keyword id="KW-0285">Flavoprotein</keyword>
<keyword id="KW-0288">FMN</keyword>
<keyword id="KW-0520">NAD</keyword>
<keyword id="KW-0560">Oxidoreductase</keyword>
<keyword id="KW-1185">Reference proteome</keyword>
<gene>
    <name type="primary">chrR</name>
    <name type="synonym">yieF</name>
    <name type="ordered locus">SF3747</name>
    <name type="ordered locus">S4025</name>
</gene>
<proteinExistence type="inferred from homology"/>
<evidence type="ECO:0000250" key="1">
    <source>
        <dbReference type="UniProtKB" id="P0AGE6"/>
    </source>
</evidence>
<evidence type="ECO:0000305" key="2"/>
<dbReference type="EC" id="1.6.5.2" evidence="1"/>
<dbReference type="EC" id="1.6.-.-" evidence="1"/>
<dbReference type="EMBL" id="AE005674">
    <property type="protein sequence ID" value="AAN45191.1"/>
    <property type="molecule type" value="Genomic_DNA"/>
</dbReference>
<dbReference type="EMBL" id="AE014073">
    <property type="protein sequence ID" value="AAP19006.1"/>
    <property type="molecule type" value="Genomic_DNA"/>
</dbReference>
<dbReference type="RefSeq" id="NP_709484.1">
    <property type="nucleotide sequence ID" value="NC_004337.2"/>
</dbReference>
<dbReference type="RefSeq" id="WP_001291268.1">
    <property type="nucleotide sequence ID" value="NZ_WPGW01000226.1"/>
</dbReference>
<dbReference type="SMR" id="P0AGE8"/>
<dbReference type="STRING" id="198214.SF3747"/>
<dbReference type="PaxDb" id="198214-SF3747"/>
<dbReference type="GeneID" id="1026147"/>
<dbReference type="GeneID" id="75173932"/>
<dbReference type="KEGG" id="sfl:SF3747"/>
<dbReference type="KEGG" id="sfx:S4025"/>
<dbReference type="PATRIC" id="fig|198214.7.peg.4423"/>
<dbReference type="HOGENOM" id="CLU_055322_4_2_6"/>
<dbReference type="Proteomes" id="UP000001006">
    <property type="component" value="Chromosome"/>
</dbReference>
<dbReference type="Proteomes" id="UP000002673">
    <property type="component" value="Chromosome"/>
</dbReference>
<dbReference type="GO" id="GO:0005829">
    <property type="term" value="C:cytosol"/>
    <property type="evidence" value="ECO:0007669"/>
    <property type="project" value="TreeGrafter"/>
</dbReference>
<dbReference type="GO" id="GO:0010181">
    <property type="term" value="F:FMN binding"/>
    <property type="evidence" value="ECO:0007669"/>
    <property type="project" value="TreeGrafter"/>
</dbReference>
<dbReference type="GO" id="GO:0050136">
    <property type="term" value="F:NADH:ubiquinone reductase (non-electrogenic) activity"/>
    <property type="evidence" value="ECO:0007669"/>
    <property type="project" value="RHEA"/>
</dbReference>
<dbReference type="GO" id="GO:0008753">
    <property type="term" value="F:NADPH dehydrogenase (quinone) activity"/>
    <property type="evidence" value="ECO:0007669"/>
    <property type="project" value="RHEA"/>
</dbReference>
<dbReference type="FunFam" id="3.40.50.360:FF:000014">
    <property type="entry name" value="NADPH-dependent FMN reductase"/>
    <property type="match status" value="1"/>
</dbReference>
<dbReference type="Gene3D" id="3.40.50.360">
    <property type="match status" value="1"/>
</dbReference>
<dbReference type="InterPro" id="IPR029039">
    <property type="entry name" value="Flavoprotein-like_sf"/>
</dbReference>
<dbReference type="InterPro" id="IPR005025">
    <property type="entry name" value="FMN_Rdtase-like_dom"/>
</dbReference>
<dbReference type="InterPro" id="IPR050712">
    <property type="entry name" value="NAD(P)H-dep_reductase"/>
</dbReference>
<dbReference type="PANTHER" id="PTHR30543">
    <property type="entry name" value="CHROMATE REDUCTASE"/>
    <property type="match status" value="1"/>
</dbReference>
<dbReference type="PANTHER" id="PTHR30543:SF21">
    <property type="entry name" value="NAD(P)H-DEPENDENT FMN REDUCTASE LOT6"/>
    <property type="match status" value="1"/>
</dbReference>
<dbReference type="Pfam" id="PF03358">
    <property type="entry name" value="FMN_red"/>
    <property type="match status" value="1"/>
</dbReference>
<dbReference type="SUPFAM" id="SSF52218">
    <property type="entry name" value="Flavoproteins"/>
    <property type="match status" value="1"/>
</dbReference>
<name>CHRR_SHIFL</name>
<sequence length="188" mass="20376">MSEKLQVVTLLGSLRKGSFNGMVARTLPKIAPASMEVNALPSIADIPLYDADVQQEEGFPATVEALAEQIRQADGVVIVTPEYNYSVPGGLKNAIDWLSRLPDQPLAGKPVLIQTSSMGVIGGARCQYHLRQILVFLDAMVMNKPEFMGGVIQNKVDPQTGEVIDQGTLDHLTGQLTAFGEFIQRVKI</sequence>
<feature type="chain" id="PRO_0000160598" description="Quinone reductase">
    <location>
        <begin position="1"/>
        <end position="188"/>
    </location>
</feature>
<feature type="binding site" evidence="1">
    <location>
        <begin position="13"/>
        <end position="20"/>
    </location>
    <ligand>
        <name>FMN</name>
        <dbReference type="ChEBI" id="CHEBI:58210"/>
    </ligand>
</feature>
<feature type="binding site" evidence="1">
    <location>
        <begin position="82"/>
        <end position="85"/>
    </location>
    <ligand>
        <name>FMN</name>
        <dbReference type="ChEBI" id="CHEBI:58210"/>
    </ligand>
</feature>
<feature type="binding site" evidence="1">
    <location>
        <position position="117"/>
    </location>
    <ligand>
        <name>FMN</name>
        <dbReference type="ChEBI" id="CHEBI:58210"/>
    </ligand>
</feature>